<proteinExistence type="inferred from homology"/>
<reference key="1">
    <citation type="submission" date="2007-08" db="EMBL/GenBank/DDBJ databases">
        <authorList>
            <consortium name="The Citrobacter koseri Genome Sequencing Project"/>
            <person name="McClelland M."/>
            <person name="Sanderson E.K."/>
            <person name="Porwollik S."/>
            <person name="Spieth J."/>
            <person name="Clifton W.S."/>
            <person name="Latreille P."/>
            <person name="Courtney L."/>
            <person name="Wang C."/>
            <person name="Pepin K."/>
            <person name="Bhonagiri V."/>
            <person name="Nash W."/>
            <person name="Johnson M."/>
            <person name="Thiruvilangam P."/>
            <person name="Wilson R."/>
        </authorList>
    </citation>
    <scope>NUCLEOTIDE SEQUENCE [LARGE SCALE GENOMIC DNA]</scope>
    <source>
        <strain>ATCC BAA-895 / CDC 4225-83 / SGSC4696</strain>
    </source>
</reference>
<organism>
    <name type="scientific">Citrobacter koseri (strain ATCC BAA-895 / CDC 4225-83 / SGSC4696)</name>
    <dbReference type="NCBI Taxonomy" id="290338"/>
    <lineage>
        <taxon>Bacteria</taxon>
        <taxon>Pseudomonadati</taxon>
        <taxon>Pseudomonadota</taxon>
        <taxon>Gammaproteobacteria</taxon>
        <taxon>Enterobacterales</taxon>
        <taxon>Enterobacteriaceae</taxon>
        <taxon>Citrobacter</taxon>
    </lineage>
</organism>
<feature type="chain" id="PRO_1000070513" description="Nucleoid occlusion factor SlmA">
    <location>
        <begin position="1"/>
        <end position="198"/>
    </location>
</feature>
<feature type="domain" description="HTH tetR-type" evidence="1">
    <location>
        <begin position="10"/>
        <end position="70"/>
    </location>
</feature>
<feature type="DNA-binding region" description="H-T-H motif" evidence="1">
    <location>
        <begin position="33"/>
        <end position="52"/>
    </location>
</feature>
<feature type="coiled-coil region" evidence="1">
    <location>
        <begin position="117"/>
        <end position="144"/>
    </location>
</feature>
<name>SLMA_CITK8</name>
<comment type="function">
    <text evidence="1">Required for nucleoid occlusion (NO) phenomenon, which prevents Z-ring formation and cell division over the nucleoid. Acts as a DNA-associated cell division inhibitor that binds simultaneously chromosomal DNA and FtsZ, and disrupts the assembly of FtsZ polymers. SlmA-DNA-binding sequences (SBS) are dispersed on non-Ter regions of the chromosome, preventing FtsZ polymerization at these regions.</text>
</comment>
<comment type="subunit">
    <text evidence="1">Homodimer. Interacts with FtsZ.</text>
</comment>
<comment type="subcellular location">
    <subcellularLocation>
        <location evidence="1">Cytoplasm</location>
        <location evidence="1">Nucleoid</location>
    </subcellularLocation>
</comment>
<comment type="similarity">
    <text evidence="1">Belongs to the nucleoid occlusion factor SlmA family.</text>
</comment>
<keyword id="KW-0131">Cell cycle</keyword>
<keyword id="KW-0132">Cell division</keyword>
<keyword id="KW-0175">Coiled coil</keyword>
<keyword id="KW-0963">Cytoplasm</keyword>
<keyword id="KW-0238">DNA-binding</keyword>
<keyword id="KW-1185">Reference proteome</keyword>
<evidence type="ECO:0000255" key="1">
    <source>
        <dbReference type="HAMAP-Rule" id="MF_01839"/>
    </source>
</evidence>
<protein>
    <recommendedName>
        <fullName evidence="1">Nucleoid occlusion factor SlmA</fullName>
    </recommendedName>
</protein>
<dbReference type="EMBL" id="CP000822">
    <property type="protein sequence ID" value="ABV16141.1"/>
    <property type="molecule type" value="Genomic_DNA"/>
</dbReference>
<dbReference type="RefSeq" id="WP_012135776.1">
    <property type="nucleotide sequence ID" value="NC_009792.1"/>
</dbReference>
<dbReference type="SMR" id="A8ARM8"/>
<dbReference type="STRING" id="290338.CKO_05098"/>
<dbReference type="GeneID" id="45138551"/>
<dbReference type="KEGG" id="cko:CKO_05098"/>
<dbReference type="HOGENOM" id="CLU_069356_5_0_6"/>
<dbReference type="OrthoDB" id="9179041at2"/>
<dbReference type="Proteomes" id="UP000008148">
    <property type="component" value="Chromosome"/>
</dbReference>
<dbReference type="GO" id="GO:0043590">
    <property type="term" value="C:bacterial nucleoid"/>
    <property type="evidence" value="ECO:0007669"/>
    <property type="project" value="UniProtKB-UniRule"/>
</dbReference>
<dbReference type="GO" id="GO:0005737">
    <property type="term" value="C:cytoplasm"/>
    <property type="evidence" value="ECO:0007669"/>
    <property type="project" value="UniProtKB-UniRule"/>
</dbReference>
<dbReference type="GO" id="GO:0003700">
    <property type="term" value="F:DNA-binding transcription factor activity"/>
    <property type="evidence" value="ECO:0007669"/>
    <property type="project" value="TreeGrafter"/>
</dbReference>
<dbReference type="GO" id="GO:0000976">
    <property type="term" value="F:transcription cis-regulatory region binding"/>
    <property type="evidence" value="ECO:0007669"/>
    <property type="project" value="TreeGrafter"/>
</dbReference>
<dbReference type="GO" id="GO:0051301">
    <property type="term" value="P:cell division"/>
    <property type="evidence" value="ECO:0007669"/>
    <property type="project" value="UniProtKB-KW"/>
</dbReference>
<dbReference type="GO" id="GO:0010974">
    <property type="term" value="P:negative regulation of division septum assembly"/>
    <property type="evidence" value="ECO:0007669"/>
    <property type="project" value="InterPro"/>
</dbReference>
<dbReference type="FunFam" id="1.10.357.10:FF:000002">
    <property type="entry name" value="Nucleoid occlusion factor SlmA"/>
    <property type="match status" value="1"/>
</dbReference>
<dbReference type="Gene3D" id="1.10.357.10">
    <property type="entry name" value="Tetracycline Repressor, domain 2"/>
    <property type="match status" value="1"/>
</dbReference>
<dbReference type="HAMAP" id="MF_01839">
    <property type="entry name" value="NO_factor_SlmA"/>
    <property type="match status" value="1"/>
</dbReference>
<dbReference type="InterPro" id="IPR023772">
    <property type="entry name" value="DNA-bd_HTH_TetR-type_CS"/>
</dbReference>
<dbReference type="InterPro" id="IPR009057">
    <property type="entry name" value="Homeodomain-like_sf"/>
</dbReference>
<dbReference type="InterPro" id="IPR050109">
    <property type="entry name" value="HTH-type_TetR-like_transc_reg"/>
</dbReference>
<dbReference type="InterPro" id="IPR001647">
    <property type="entry name" value="HTH_TetR"/>
</dbReference>
<dbReference type="InterPro" id="IPR023769">
    <property type="entry name" value="NO_SlmA"/>
</dbReference>
<dbReference type="InterPro" id="IPR054580">
    <property type="entry name" value="SlmA-like_C"/>
</dbReference>
<dbReference type="InterPro" id="IPR036271">
    <property type="entry name" value="Tet_transcr_reg_TetR-rel_C_sf"/>
</dbReference>
<dbReference type="NCBIfam" id="NF007015">
    <property type="entry name" value="PRK09480.1"/>
    <property type="match status" value="1"/>
</dbReference>
<dbReference type="PANTHER" id="PTHR30055">
    <property type="entry name" value="HTH-TYPE TRANSCRIPTIONAL REGULATOR RUTR"/>
    <property type="match status" value="1"/>
</dbReference>
<dbReference type="PANTHER" id="PTHR30055:SF183">
    <property type="entry name" value="NUCLEOID OCCLUSION FACTOR SLMA"/>
    <property type="match status" value="1"/>
</dbReference>
<dbReference type="Pfam" id="PF22276">
    <property type="entry name" value="SlmA-like_C"/>
    <property type="match status" value="1"/>
</dbReference>
<dbReference type="Pfam" id="PF00440">
    <property type="entry name" value="TetR_N"/>
    <property type="match status" value="1"/>
</dbReference>
<dbReference type="SUPFAM" id="SSF46689">
    <property type="entry name" value="Homeodomain-like"/>
    <property type="match status" value="1"/>
</dbReference>
<dbReference type="SUPFAM" id="SSF48498">
    <property type="entry name" value="Tetracyclin repressor-like, C-terminal domain"/>
    <property type="match status" value="1"/>
</dbReference>
<dbReference type="PROSITE" id="PS01081">
    <property type="entry name" value="HTH_TETR_1"/>
    <property type="match status" value="1"/>
</dbReference>
<dbReference type="PROSITE" id="PS50977">
    <property type="entry name" value="HTH_TETR_2"/>
    <property type="match status" value="1"/>
</dbReference>
<gene>
    <name evidence="1" type="primary">slmA</name>
    <name type="ordered locus">CKO_05098</name>
</gene>
<sequence>MAEKQTAKRNRREEILQSLALMLESSDGSQRITTAKLAASVGVSEAALYRHFPSKTRMFDSLIEFIEDSLITRINLILKDEKDTSARLRLIVLLILGFGERNPGLTRILTGHALMFEQDRLQGRINQLFERIEAQLRQVLREKRMREGEGYATDETLLASQLLAFCEGMLSRFVRSEFKYRPTDDFDARWPLVAAQLQ</sequence>
<accession>A8ARM8</accession>